<dbReference type="EMBL" id="AE005674">
    <property type="protein sequence ID" value="AAN45217.2"/>
    <property type="status" value="ALT_INIT"/>
    <property type="molecule type" value="Genomic_DNA"/>
</dbReference>
<dbReference type="EMBL" id="AE014073">
    <property type="protein sequence ID" value="AAP18980.1"/>
    <property type="status" value="ALT_INIT"/>
    <property type="molecule type" value="Genomic_DNA"/>
</dbReference>
<dbReference type="RefSeq" id="NP_709510.4">
    <property type="nucleotide sequence ID" value="NC_004337.2"/>
</dbReference>
<dbReference type="RefSeq" id="WP_000620888.1">
    <property type="nucleotide sequence ID" value="NZ_WPGW01000019.1"/>
</dbReference>
<dbReference type="STRING" id="198214.SF3775"/>
<dbReference type="PaxDb" id="198214-SF3775"/>
<dbReference type="GeneID" id="1026106"/>
<dbReference type="KEGG" id="sfl:SF3775"/>
<dbReference type="KEGG" id="sfx:S3995"/>
<dbReference type="PATRIC" id="fig|198214.7.peg.4455"/>
<dbReference type="HOGENOM" id="CLU_129878_0_0_6"/>
<dbReference type="Proteomes" id="UP000001006">
    <property type="component" value="Chromosome"/>
</dbReference>
<dbReference type="Proteomes" id="UP000002673">
    <property type="component" value="Chromosome"/>
</dbReference>
<dbReference type="InterPro" id="IPR010780">
    <property type="entry name" value="DUF1375"/>
</dbReference>
<dbReference type="NCBIfam" id="NF008628">
    <property type="entry name" value="PRK11616.1"/>
    <property type="match status" value="1"/>
</dbReference>
<dbReference type="Pfam" id="PF07119">
    <property type="entry name" value="DUF1375"/>
    <property type="match status" value="1"/>
</dbReference>
<dbReference type="PROSITE" id="PS51257">
    <property type="entry name" value="PROKAR_LIPOPROTEIN"/>
    <property type="match status" value="1"/>
</dbReference>
<evidence type="ECO:0000255" key="1">
    <source>
        <dbReference type="PROSITE-ProRule" id="PRU00303"/>
    </source>
</evidence>
<evidence type="ECO:0000256" key="2">
    <source>
        <dbReference type="SAM" id="MobiDB-lite"/>
    </source>
</evidence>
<evidence type="ECO:0000305" key="3"/>
<proteinExistence type="inferred from homology"/>
<sequence length="110" mass="11826">MIRNVLLAFMICSGMTLLGGCSSVMSHTGGKEGTYPGTRASATMIGDDETNWGTKSLAILDMPFTAVMDTLLLPWDVFRKDSSVRSRVEKSEANAQATNAVIPPARMPDN</sequence>
<accession>P0ADM5</accession>
<accession>P31454</accession>
<keyword id="KW-1185">Reference proteome</keyword>
<keyword id="KW-0732">Signal</keyword>
<reference key="1">
    <citation type="journal article" date="2002" name="Nucleic Acids Res.">
        <title>Genome sequence of Shigella flexneri 2a: insights into pathogenicity through comparison with genomes of Escherichia coli K12 and O157.</title>
        <authorList>
            <person name="Jin Q."/>
            <person name="Yuan Z."/>
            <person name="Xu J."/>
            <person name="Wang Y."/>
            <person name="Shen Y."/>
            <person name="Lu W."/>
            <person name="Wang J."/>
            <person name="Liu H."/>
            <person name="Yang J."/>
            <person name="Yang F."/>
            <person name="Zhang X."/>
            <person name="Zhang J."/>
            <person name="Yang G."/>
            <person name="Wu H."/>
            <person name="Qu D."/>
            <person name="Dong J."/>
            <person name="Sun L."/>
            <person name="Xue Y."/>
            <person name="Zhao A."/>
            <person name="Gao Y."/>
            <person name="Zhu J."/>
            <person name="Kan B."/>
            <person name="Ding K."/>
            <person name="Chen S."/>
            <person name="Cheng H."/>
            <person name="Yao Z."/>
            <person name="He B."/>
            <person name="Chen R."/>
            <person name="Ma D."/>
            <person name="Qiang B."/>
            <person name="Wen Y."/>
            <person name="Hou Y."/>
            <person name="Yu J."/>
        </authorList>
    </citation>
    <scope>NUCLEOTIDE SEQUENCE [LARGE SCALE GENOMIC DNA]</scope>
    <source>
        <strain>301 / Serotype 2a</strain>
    </source>
</reference>
<reference key="2">
    <citation type="journal article" date="2003" name="Infect. Immun.">
        <title>Complete genome sequence and comparative genomics of Shigella flexneri serotype 2a strain 2457T.</title>
        <authorList>
            <person name="Wei J."/>
            <person name="Goldberg M.B."/>
            <person name="Burland V."/>
            <person name="Venkatesan M.M."/>
            <person name="Deng W."/>
            <person name="Fournier G."/>
            <person name="Mayhew G.F."/>
            <person name="Plunkett G. III"/>
            <person name="Rose D.J."/>
            <person name="Darling A."/>
            <person name="Mau B."/>
            <person name="Perna N.T."/>
            <person name="Payne S.M."/>
            <person name="Runyen-Janecky L.J."/>
            <person name="Zhou S."/>
            <person name="Schwartz D.C."/>
            <person name="Blattner F.R."/>
        </authorList>
    </citation>
    <scope>NUCLEOTIDE SEQUENCE [LARGE SCALE GENOMIC DNA]</scope>
    <source>
        <strain>ATCC 700930 / 2457T / Serotype 2a</strain>
    </source>
</reference>
<protein>
    <recommendedName>
        <fullName>Uncharacterized protein YidQ</fullName>
    </recommendedName>
</protein>
<comment type="similarity">
    <text evidence="3">To E.coli YceK.</text>
</comment>
<comment type="sequence caution" evidence="3">
    <conflict type="erroneous initiation">
        <sequence resource="EMBL-CDS" id="AAN45217"/>
    </conflict>
    <text>Extended N-terminus.</text>
</comment>
<comment type="sequence caution" evidence="3">
    <conflict type="erroneous initiation">
        <sequence resource="EMBL-CDS" id="AAP18980"/>
    </conflict>
    <text>Extended N-terminus.</text>
</comment>
<gene>
    <name type="primary">yidQ</name>
    <name type="ordered locus">SF3775</name>
    <name type="ordered locus">S3995</name>
</gene>
<feature type="signal peptide" evidence="1">
    <location>
        <begin position="1"/>
        <end position="26"/>
    </location>
</feature>
<feature type="chain" id="PRO_0000043223" description="Uncharacterized protein YidQ">
    <location>
        <begin position="27"/>
        <end position="110"/>
    </location>
</feature>
<feature type="region of interest" description="Disordered" evidence="2">
    <location>
        <begin position="87"/>
        <end position="110"/>
    </location>
</feature>
<organism>
    <name type="scientific">Shigella flexneri</name>
    <dbReference type="NCBI Taxonomy" id="623"/>
    <lineage>
        <taxon>Bacteria</taxon>
        <taxon>Pseudomonadati</taxon>
        <taxon>Pseudomonadota</taxon>
        <taxon>Gammaproteobacteria</taxon>
        <taxon>Enterobacterales</taxon>
        <taxon>Enterobacteriaceae</taxon>
        <taxon>Shigella</taxon>
    </lineage>
</organism>
<name>YIDQ_SHIFL</name>